<evidence type="ECO:0000255" key="1">
    <source>
        <dbReference type="PROSITE-ProRule" id="PRU00053"/>
    </source>
</evidence>
<evidence type="ECO:0000256" key="2">
    <source>
        <dbReference type="SAM" id="MobiDB-lite"/>
    </source>
</evidence>
<evidence type="ECO:0000269" key="3">
    <source>
    </source>
</evidence>
<organism>
    <name type="scientific">Caenorhabditis elegans</name>
    <dbReference type="NCBI Taxonomy" id="6239"/>
    <lineage>
        <taxon>Eukaryota</taxon>
        <taxon>Metazoa</taxon>
        <taxon>Ecdysozoa</taxon>
        <taxon>Nematoda</taxon>
        <taxon>Chromadorea</taxon>
        <taxon>Rhabditida</taxon>
        <taxon>Rhabditina</taxon>
        <taxon>Rhabditomorpha</taxon>
        <taxon>Rhabditoidea</taxon>
        <taxon>Rhabditidae</taxon>
        <taxon>Peloderinae</taxon>
        <taxon>Caenorhabditis</taxon>
    </lineage>
</organism>
<sequence length="304" mass="33784">MADGSELYTVESILEHRKKKGKSEFYIKWLGYDHTHNSWEPKENIVDPTLIEAFFTREAARKAEIKAKKDKMAAGKKGASSKASASVSKASASTPARGAKAAPKPPPKKSPPKRQRLAGGDIRPDSDTDEEHSSADKKSKAEDEEEVEDDEEPVPKKKKEVQEEPEEEESVEGEDEEESQEVEDLKEDEKMEEDEKEEEEDVQLESEKNEKEEEEEKVEEKKEEEEEEEEEEIQLVIVEKTVIETTIVEPAVATPEPSEPSSSEKAVVENGSSSAAAGNSASKPEVSAVEVVTVEDDDDIAIIE</sequence>
<accession>P34618</accession>
<comment type="subcellular location">
    <subcellularLocation>
        <location evidence="3">Nucleus</location>
    </subcellularLocation>
    <subcellularLocation>
        <location evidence="3">Chromosome</location>
    </subcellularLocation>
    <text>During mitosis it seems to dissociate from the condensing chromosomes.</text>
</comment>
<comment type="developmental stage">
    <text evidence="3">Present in all somatic cells from the 50- to 80-cell stage on throughout development and in adult animals.</text>
</comment>
<keyword id="KW-0158">Chromosome</keyword>
<keyword id="KW-0238">DNA-binding</keyword>
<keyword id="KW-0539">Nucleus</keyword>
<keyword id="KW-1185">Reference proteome</keyword>
<reference key="1">
    <citation type="journal article" date="1994" name="Nature">
        <title>2.2 Mb of contiguous nucleotide sequence from chromosome III of C. elegans.</title>
        <authorList>
            <person name="Wilson R."/>
            <person name="Ainscough R."/>
            <person name="Anderson K."/>
            <person name="Baynes C."/>
            <person name="Berks M."/>
            <person name="Bonfield J."/>
            <person name="Burton J."/>
            <person name="Connell M."/>
            <person name="Copsey T."/>
            <person name="Cooper J."/>
            <person name="Coulson A."/>
            <person name="Craxton M."/>
            <person name="Dear S."/>
            <person name="Du Z."/>
            <person name="Durbin R."/>
            <person name="Favello A."/>
            <person name="Fraser A."/>
            <person name="Fulton L."/>
            <person name="Gardner A."/>
            <person name="Green P."/>
            <person name="Hawkins T."/>
            <person name="Hillier L."/>
            <person name="Jier M."/>
            <person name="Johnston L."/>
            <person name="Jones M."/>
            <person name="Kershaw J."/>
            <person name="Kirsten J."/>
            <person name="Laisster N."/>
            <person name="Latreille P."/>
            <person name="Lightning J."/>
            <person name="Lloyd C."/>
            <person name="Mortimore B."/>
            <person name="O'Callaghan M."/>
            <person name="Parsons J."/>
            <person name="Percy C."/>
            <person name="Rifken L."/>
            <person name="Roopra A."/>
            <person name="Saunders D."/>
            <person name="Shownkeen R."/>
            <person name="Sims M."/>
            <person name="Smaldon N."/>
            <person name="Smith A."/>
            <person name="Smith M."/>
            <person name="Sonnhammer E."/>
            <person name="Staden R."/>
            <person name="Sulston J."/>
            <person name="Thierry-Mieg J."/>
            <person name="Thomas K."/>
            <person name="Vaudin M."/>
            <person name="Vaughan K."/>
            <person name="Waterston R."/>
            <person name="Watson A."/>
            <person name="Weinstock L."/>
            <person name="Wilkinson-Sproat J."/>
            <person name="Wohldman P."/>
        </authorList>
    </citation>
    <scope>NUCLEOTIDE SEQUENCE [LARGE SCALE GENOMIC DNA]</scope>
    <source>
        <strain>Bristol N2</strain>
    </source>
</reference>
<reference key="2">
    <citation type="journal article" date="1998" name="Science">
        <title>Genome sequence of the nematode C. elegans: a platform for investigating biology.</title>
        <authorList>
            <consortium name="The C. elegans sequencing consortium"/>
        </authorList>
    </citation>
    <scope>NUCLEOTIDE SEQUENCE [LARGE SCALE GENOMIC DNA]</scope>
    <source>
        <strain>Bristol N2</strain>
    </source>
</reference>
<reference key="3">
    <citation type="journal article" date="1996" name="Dev. Biol.">
        <title>cec-1, a soma-specific chromobox-containing gene in C. elegans.</title>
        <authorList>
            <person name="Agostoni E."/>
            <person name="Albertson D."/>
            <person name="Wittmann C."/>
            <person name="Hill F."/>
            <person name="Tobler H."/>
            <person name="Muller F."/>
        </authorList>
    </citation>
    <scope>SUBCELLULAR LOCATION</scope>
    <scope>DEVELOPMENTAL STAGE</scope>
</reference>
<proteinExistence type="evidence at transcript level"/>
<protein>
    <recommendedName>
        <fullName>Chromo domain-containing protein cec-1</fullName>
    </recommendedName>
</protein>
<feature type="chain" id="PRO_0000080240" description="Chromo domain-containing protein cec-1">
    <location>
        <begin position="1"/>
        <end position="304"/>
    </location>
</feature>
<feature type="domain" description="Chromo" evidence="1">
    <location>
        <begin position="8"/>
        <end position="66"/>
    </location>
</feature>
<feature type="region of interest" description="Disordered" evidence="2">
    <location>
        <begin position="63"/>
        <end position="235"/>
    </location>
</feature>
<feature type="region of interest" description="Disordered" evidence="2">
    <location>
        <begin position="248"/>
        <end position="304"/>
    </location>
</feature>
<feature type="compositionally biased region" description="Basic and acidic residues" evidence="2">
    <location>
        <begin position="63"/>
        <end position="73"/>
    </location>
</feature>
<feature type="compositionally biased region" description="Low complexity" evidence="2">
    <location>
        <begin position="75"/>
        <end position="102"/>
    </location>
</feature>
<feature type="compositionally biased region" description="Basic residues" evidence="2">
    <location>
        <begin position="106"/>
        <end position="116"/>
    </location>
</feature>
<feature type="compositionally biased region" description="Basic and acidic residues" evidence="2">
    <location>
        <begin position="122"/>
        <end position="141"/>
    </location>
</feature>
<feature type="compositionally biased region" description="Acidic residues" evidence="2">
    <location>
        <begin position="142"/>
        <end position="152"/>
    </location>
</feature>
<feature type="compositionally biased region" description="Acidic residues" evidence="2">
    <location>
        <begin position="163"/>
        <end position="204"/>
    </location>
</feature>
<feature type="compositionally biased region" description="Acidic residues" evidence="2">
    <location>
        <begin position="212"/>
        <end position="233"/>
    </location>
</feature>
<feature type="compositionally biased region" description="Low complexity" evidence="2">
    <location>
        <begin position="248"/>
        <end position="292"/>
    </location>
</feature>
<feature type="compositionally biased region" description="Acidic residues" evidence="2">
    <location>
        <begin position="293"/>
        <end position="304"/>
    </location>
</feature>
<gene>
    <name type="primary">cec-1</name>
    <name type="ORF">ZK1236.2</name>
</gene>
<dbReference type="EMBL" id="FO080723">
    <property type="protein sequence ID" value="CCD66162.1"/>
    <property type="molecule type" value="Genomic_DNA"/>
</dbReference>
<dbReference type="PIR" id="S44897">
    <property type="entry name" value="S44897"/>
</dbReference>
<dbReference type="RefSeq" id="NP_498862.1">
    <property type="nucleotide sequence ID" value="NM_066461.6"/>
</dbReference>
<dbReference type="SMR" id="P34618"/>
<dbReference type="BioGRID" id="41394">
    <property type="interactions" value="4"/>
</dbReference>
<dbReference type="FunCoup" id="P34618">
    <property type="interactions" value="1"/>
</dbReference>
<dbReference type="IntAct" id="P34618">
    <property type="interactions" value="2"/>
</dbReference>
<dbReference type="STRING" id="6239.ZK1236.2.1"/>
<dbReference type="iPTMnet" id="P34618"/>
<dbReference type="PaxDb" id="6239-ZK1236.2"/>
<dbReference type="PeptideAtlas" id="P34618"/>
<dbReference type="EnsemblMetazoa" id="ZK1236.2.1">
    <property type="protein sequence ID" value="ZK1236.2.1"/>
    <property type="gene ID" value="WBGene00000414"/>
</dbReference>
<dbReference type="GeneID" id="176190"/>
<dbReference type="KEGG" id="cel:CELE_ZK1236.2"/>
<dbReference type="UCSC" id="ZK1236.2">
    <property type="organism name" value="c. elegans"/>
</dbReference>
<dbReference type="AGR" id="WB:WBGene00000414"/>
<dbReference type="CTD" id="176190"/>
<dbReference type="WormBase" id="ZK1236.2">
    <property type="protein sequence ID" value="CE00380"/>
    <property type="gene ID" value="WBGene00000414"/>
    <property type="gene designation" value="cec-1"/>
</dbReference>
<dbReference type="eggNOG" id="KOG2748">
    <property type="taxonomic scope" value="Eukaryota"/>
</dbReference>
<dbReference type="HOGENOM" id="CLU_915976_0_0_1"/>
<dbReference type="InParanoid" id="P34618"/>
<dbReference type="OMA" id="QYNGSHT"/>
<dbReference type="OrthoDB" id="1918685at2759"/>
<dbReference type="PRO" id="PR:P34618"/>
<dbReference type="Proteomes" id="UP000001940">
    <property type="component" value="Chromosome III"/>
</dbReference>
<dbReference type="Bgee" id="WBGene00000414">
    <property type="expression patterns" value="Expressed in pharyngeal muscle cell (C elegans) and 4 other cell types or tissues"/>
</dbReference>
<dbReference type="GO" id="GO:0005634">
    <property type="term" value="C:nucleus"/>
    <property type="evidence" value="ECO:0007669"/>
    <property type="project" value="UniProtKB-SubCell"/>
</dbReference>
<dbReference type="GO" id="GO:0005721">
    <property type="term" value="C:pericentric heterochromatin"/>
    <property type="evidence" value="ECO:0000318"/>
    <property type="project" value="GO_Central"/>
</dbReference>
<dbReference type="GO" id="GO:0003682">
    <property type="term" value="F:chromatin binding"/>
    <property type="evidence" value="ECO:0000318"/>
    <property type="project" value="GO_Central"/>
</dbReference>
<dbReference type="GO" id="GO:0003677">
    <property type="term" value="F:DNA binding"/>
    <property type="evidence" value="ECO:0007669"/>
    <property type="project" value="UniProtKB-KW"/>
</dbReference>
<dbReference type="GO" id="GO:0035064">
    <property type="term" value="F:methylated histone binding"/>
    <property type="evidence" value="ECO:0000318"/>
    <property type="project" value="GO_Central"/>
</dbReference>
<dbReference type="GO" id="GO:0031507">
    <property type="term" value="P:heterochromatin formation"/>
    <property type="evidence" value="ECO:0000318"/>
    <property type="project" value="GO_Central"/>
</dbReference>
<dbReference type="CDD" id="cd00024">
    <property type="entry name" value="CD_CSD"/>
    <property type="match status" value="1"/>
</dbReference>
<dbReference type="Gene3D" id="2.40.50.40">
    <property type="match status" value="1"/>
</dbReference>
<dbReference type="InterPro" id="IPR016197">
    <property type="entry name" value="Chromo-like_dom_sf"/>
</dbReference>
<dbReference type="InterPro" id="IPR000953">
    <property type="entry name" value="Chromo/chromo_shadow_dom"/>
</dbReference>
<dbReference type="InterPro" id="IPR023780">
    <property type="entry name" value="Chromo_domain"/>
</dbReference>
<dbReference type="InterPro" id="IPR023779">
    <property type="entry name" value="Chromodomain_CS"/>
</dbReference>
<dbReference type="InterPro" id="IPR051219">
    <property type="entry name" value="Heterochromatin_chromo-domain"/>
</dbReference>
<dbReference type="PANTHER" id="PTHR22812">
    <property type="entry name" value="CHROMOBOX PROTEIN"/>
    <property type="match status" value="1"/>
</dbReference>
<dbReference type="Pfam" id="PF00385">
    <property type="entry name" value="Chromo"/>
    <property type="match status" value="1"/>
</dbReference>
<dbReference type="SMART" id="SM00298">
    <property type="entry name" value="CHROMO"/>
    <property type="match status" value="1"/>
</dbReference>
<dbReference type="SUPFAM" id="SSF54160">
    <property type="entry name" value="Chromo domain-like"/>
    <property type="match status" value="1"/>
</dbReference>
<dbReference type="PROSITE" id="PS00598">
    <property type="entry name" value="CHROMO_1"/>
    <property type="match status" value="1"/>
</dbReference>
<dbReference type="PROSITE" id="PS50013">
    <property type="entry name" value="CHROMO_2"/>
    <property type="match status" value="1"/>
</dbReference>
<name>CEC1_CAEEL</name>